<gene>
    <name evidence="1" type="primary">rpl1</name>
</gene>
<organism>
    <name type="scientific">Methanococcus voltae</name>
    <dbReference type="NCBI Taxonomy" id="2188"/>
    <lineage>
        <taxon>Archaea</taxon>
        <taxon>Methanobacteriati</taxon>
        <taxon>Methanobacteriota</taxon>
        <taxon>Methanomada group</taxon>
        <taxon>Methanococci</taxon>
        <taxon>Methanococcales</taxon>
        <taxon>Methanococcaceae</taxon>
        <taxon>Methanococcus</taxon>
    </lineage>
</organism>
<evidence type="ECO:0000255" key="1">
    <source>
        <dbReference type="HAMAP-Rule" id="MF_01318"/>
    </source>
</evidence>
<evidence type="ECO:0000305" key="2"/>
<comment type="function">
    <text evidence="1">Binds directly to 23S rRNA. Probably involved in E site tRNA release.</text>
</comment>
<comment type="function">
    <text evidence="1">Protein L1 is also a translational repressor protein, it controls the translation of its operon by binding to its mRNA.</text>
</comment>
<comment type="subunit">
    <text evidence="1">Part of the 50S ribosomal subunit.</text>
</comment>
<comment type="similarity">
    <text evidence="1">Belongs to the universal ribosomal protein uL1 family.</text>
</comment>
<keyword id="KW-0678">Repressor</keyword>
<keyword id="KW-0687">Ribonucleoprotein</keyword>
<keyword id="KW-0689">Ribosomal protein</keyword>
<keyword id="KW-0694">RNA-binding</keyword>
<keyword id="KW-0699">rRNA-binding</keyword>
<keyword id="KW-0810">Translation regulation</keyword>
<keyword id="KW-0820">tRNA-binding</keyword>
<name>RL1_METVO</name>
<proteinExistence type="inferred from homology"/>
<accession>Q9Y8J2</accession>
<feature type="chain" id="PRO_0000125805" description="Large ribosomal subunit protein uL1">
    <location>
        <begin position="1"/>
        <end position="213"/>
    </location>
</feature>
<dbReference type="EMBL" id="AF139164">
    <property type="protein sequence ID" value="AAD32664.1"/>
    <property type="molecule type" value="Genomic_DNA"/>
</dbReference>
<dbReference type="SMR" id="Q9Y8J2"/>
<dbReference type="GO" id="GO:0015934">
    <property type="term" value="C:large ribosomal subunit"/>
    <property type="evidence" value="ECO:0007669"/>
    <property type="project" value="InterPro"/>
</dbReference>
<dbReference type="GO" id="GO:0019843">
    <property type="term" value="F:rRNA binding"/>
    <property type="evidence" value="ECO:0007669"/>
    <property type="project" value="UniProtKB-UniRule"/>
</dbReference>
<dbReference type="GO" id="GO:0003735">
    <property type="term" value="F:structural constituent of ribosome"/>
    <property type="evidence" value="ECO:0007669"/>
    <property type="project" value="InterPro"/>
</dbReference>
<dbReference type="GO" id="GO:0000049">
    <property type="term" value="F:tRNA binding"/>
    <property type="evidence" value="ECO:0007669"/>
    <property type="project" value="UniProtKB-KW"/>
</dbReference>
<dbReference type="GO" id="GO:0006417">
    <property type="term" value="P:regulation of translation"/>
    <property type="evidence" value="ECO:0007669"/>
    <property type="project" value="UniProtKB-KW"/>
</dbReference>
<dbReference type="GO" id="GO:0006412">
    <property type="term" value="P:translation"/>
    <property type="evidence" value="ECO:0007669"/>
    <property type="project" value="UniProtKB-UniRule"/>
</dbReference>
<dbReference type="CDD" id="cd00403">
    <property type="entry name" value="Ribosomal_L1"/>
    <property type="match status" value="1"/>
</dbReference>
<dbReference type="FunFam" id="3.40.50.790:FF:000005">
    <property type="entry name" value="50S ribosomal protein L1"/>
    <property type="match status" value="1"/>
</dbReference>
<dbReference type="Gene3D" id="3.30.190.20">
    <property type="match status" value="1"/>
</dbReference>
<dbReference type="Gene3D" id="3.40.50.790">
    <property type="match status" value="1"/>
</dbReference>
<dbReference type="HAMAP" id="MF_01318_A">
    <property type="entry name" value="Ribosomal_uL1_A"/>
    <property type="match status" value="1"/>
</dbReference>
<dbReference type="InterPro" id="IPR002143">
    <property type="entry name" value="Ribosomal_uL1"/>
</dbReference>
<dbReference type="InterPro" id="IPR023674">
    <property type="entry name" value="Ribosomal_uL1-like"/>
</dbReference>
<dbReference type="InterPro" id="IPR028364">
    <property type="entry name" value="Ribosomal_uL1/biogenesis"/>
</dbReference>
<dbReference type="InterPro" id="IPR016095">
    <property type="entry name" value="Ribosomal_uL1_3-a/b-sand"/>
</dbReference>
<dbReference type="InterPro" id="IPR023669">
    <property type="entry name" value="Ribosomal_uL1_arc"/>
</dbReference>
<dbReference type="InterPro" id="IPR023673">
    <property type="entry name" value="Ribosomal_uL1_CS"/>
</dbReference>
<dbReference type="NCBIfam" id="NF003244">
    <property type="entry name" value="PRK04203.1"/>
    <property type="match status" value="1"/>
</dbReference>
<dbReference type="PANTHER" id="PTHR36427">
    <property type="entry name" value="54S RIBOSOMAL PROTEIN L1, MITOCHONDRIAL"/>
    <property type="match status" value="1"/>
</dbReference>
<dbReference type="PANTHER" id="PTHR36427:SF3">
    <property type="entry name" value="LARGE RIBOSOMAL SUBUNIT PROTEIN UL1M"/>
    <property type="match status" value="1"/>
</dbReference>
<dbReference type="Pfam" id="PF00687">
    <property type="entry name" value="Ribosomal_L1"/>
    <property type="match status" value="1"/>
</dbReference>
<dbReference type="PIRSF" id="PIRSF002155">
    <property type="entry name" value="Ribosomal_L1"/>
    <property type="match status" value="1"/>
</dbReference>
<dbReference type="SUPFAM" id="SSF56808">
    <property type="entry name" value="Ribosomal protein L1"/>
    <property type="match status" value="1"/>
</dbReference>
<dbReference type="PROSITE" id="PS01199">
    <property type="entry name" value="RIBOSOMAL_L1"/>
    <property type="match status" value="1"/>
</dbReference>
<reference key="1">
    <citation type="submission" date="1999-03" db="EMBL/GenBank/DDBJ databases">
        <authorList>
            <person name="Piendl W."/>
            <person name="Tribus M."/>
        </authorList>
    </citation>
    <scope>NUCLEOTIDE SEQUENCE [GENOMIC DNA]</scope>
</reference>
<sequence>MDSVKIINAVKEARNSAKPRNFTQSVDLIINLKELDLSRPENRMKQQIVLPSGLGKEINIAVIAKGDLAAQAESMGLTVIRQEELEELGKNKKQAKKLANANQFFIAQADMMPIVGKSLGAVLGPRGKMPQPVPANANLKPLVERFGKTISINTRDKAFFQVYVGKESMSDEELAANIEAVLNTVARKYEKGLYHVKNAFTKLTMGASAPIEK</sequence>
<protein>
    <recommendedName>
        <fullName evidence="1">Large ribosomal subunit protein uL1</fullName>
    </recommendedName>
    <alternativeName>
        <fullName evidence="2">50S ribosomal protein L1</fullName>
    </alternativeName>
</protein>